<comment type="catalytic activity">
    <reaction evidence="1">
        <text>2-(N(omega)-L-arginino)succinate = fumarate + L-arginine</text>
        <dbReference type="Rhea" id="RHEA:24020"/>
        <dbReference type="ChEBI" id="CHEBI:29806"/>
        <dbReference type="ChEBI" id="CHEBI:32682"/>
        <dbReference type="ChEBI" id="CHEBI:57472"/>
        <dbReference type="EC" id="4.3.2.1"/>
    </reaction>
</comment>
<comment type="pathway">
    <text evidence="1">Amino-acid biosynthesis; L-arginine biosynthesis; L-arginine from L-ornithine and carbamoyl phosphate: step 3/3.</text>
</comment>
<comment type="subcellular location">
    <subcellularLocation>
        <location evidence="1">Cytoplasm</location>
    </subcellularLocation>
</comment>
<comment type="similarity">
    <text evidence="1">Belongs to the lyase 1 family. Argininosuccinate lyase subfamily.</text>
</comment>
<dbReference type="EC" id="4.3.2.1" evidence="1"/>
<dbReference type="EMBL" id="CP000825">
    <property type="protein sequence ID" value="ABV49630.1"/>
    <property type="molecule type" value="Genomic_DNA"/>
</dbReference>
<dbReference type="RefSeq" id="WP_012006816.1">
    <property type="nucleotide sequence ID" value="NC_009840.1"/>
</dbReference>
<dbReference type="SMR" id="A8G1Z9"/>
<dbReference type="STRING" id="93060.P9215_00111"/>
<dbReference type="KEGG" id="pmh:P9215_00111"/>
<dbReference type="eggNOG" id="COG0165">
    <property type="taxonomic scope" value="Bacteria"/>
</dbReference>
<dbReference type="HOGENOM" id="CLU_027272_2_3_3"/>
<dbReference type="OrthoDB" id="9769623at2"/>
<dbReference type="UniPathway" id="UPA00068">
    <property type="reaction ID" value="UER00114"/>
</dbReference>
<dbReference type="Proteomes" id="UP000002014">
    <property type="component" value="Chromosome"/>
</dbReference>
<dbReference type="GO" id="GO:0005829">
    <property type="term" value="C:cytosol"/>
    <property type="evidence" value="ECO:0007669"/>
    <property type="project" value="TreeGrafter"/>
</dbReference>
<dbReference type="GO" id="GO:0004056">
    <property type="term" value="F:argininosuccinate lyase activity"/>
    <property type="evidence" value="ECO:0007669"/>
    <property type="project" value="UniProtKB-UniRule"/>
</dbReference>
<dbReference type="GO" id="GO:0042450">
    <property type="term" value="P:arginine biosynthetic process via ornithine"/>
    <property type="evidence" value="ECO:0007669"/>
    <property type="project" value="InterPro"/>
</dbReference>
<dbReference type="GO" id="GO:0006526">
    <property type="term" value="P:L-arginine biosynthetic process"/>
    <property type="evidence" value="ECO:0007669"/>
    <property type="project" value="UniProtKB-UniRule"/>
</dbReference>
<dbReference type="CDD" id="cd01359">
    <property type="entry name" value="Argininosuccinate_lyase"/>
    <property type="match status" value="1"/>
</dbReference>
<dbReference type="FunFam" id="1.10.40.30:FF:000001">
    <property type="entry name" value="Argininosuccinate lyase"/>
    <property type="match status" value="1"/>
</dbReference>
<dbReference type="FunFam" id="1.20.200.10:FF:000015">
    <property type="entry name" value="argininosuccinate lyase isoform X2"/>
    <property type="match status" value="1"/>
</dbReference>
<dbReference type="Gene3D" id="1.10.40.30">
    <property type="entry name" value="Fumarase/aspartase (C-terminal domain)"/>
    <property type="match status" value="1"/>
</dbReference>
<dbReference type="Gene3D" id="1.20.200.10">
    <property type="entry name" value="Fumarase/aspartase (Central domain)"/>
    <property type="match status" value="1"/>
</dbReference>
<dbReference type="Gene3D" id="1.10.275.10">
    <property type="entry name" value="Fumarase/aspartase (N-terminal domain)"/>
    <property type="match status" value="1"/>
</dbReference>
<dbReference type="HAMAP" id="MF_00006">
    <property type="entry name" value="Arg_succ_lyase"/>
    <property type="match status" value="1"/>
</dbReference>
<dbReference type="InterPro" id="IPR029419">
    <property type="entry name" value="Arg_succ_lyase_C"/>
</dbReference>
<dbReference type="InterPro" id="IPR009049">
    <property type="entry name" value="Argininosuccinate_lyase"/>
</dbReference>
<dbReference type="InterPro" id="IPR024083">
    <property type="entry name" value="Fumarase/histidase_N"/>
</dbReference>
<dbReference type="InterPro" id="IPR020557">
    <property type="entry name" value="Fumarate_lyase_CS"/>
</dbReference>
<dbReference type="InterPro" id="IPR000362">
    <property type="entry name" value="Fumarate_lyase_fam"/>
</dbReference>
<dbReference type="InterPro" id="IPR022761">
    <property type="entry name" value="Fumarate_lyase_N"/>
</dbReference>
<dbReference type="InterPro" id="IPR008948">
    <property type="entry name" value="L-Aspartase-like"/>
</dbReference>
<dbReference type="NCBIfam" id="TIGR00838">
    <property type="entry name" value="argH"/>
    <property type="match status" value="1"/>
</dbReference>
<dbReference type="PANTHER" id="PTHR43814">
    <property type="entry name" value="ARGININOSUCCINATE LYASE"/>
    <property type="match status" value="1"/>
</dbReference>
<dbReference type="PANTHER" id="PTHR43814:SF1">
    <property type="entry name" value="ARGININOSUCCINATE LYASE"/>
    <property type="match status" value="1"/>
</dbReference>
<dbReference type="Pfam" id="PF14698">
    <property type="entry name" value="ASL_C2"/>
    <property type="match status" value="1"/>
</dbReference>
<dbReference type="Pfam" id="PF00206">
    <property type="entry name" value="Lyase_1"/>
    <property type="match status" value="1"/>
</dbReference>
<dbReference type="PRINTS" id="PR00145">
    <property type="entry name" value="ARGSUCLYASE"/>
</dbReference>
<dbReference type="PRINTS" id="PR00149">
    <property type="entry name" value="FUMRATELYASE"/>
</dbReference>
<dbReference type="SUPFAM" id="SSF48557">
    <property type="entry name" value="L-aspartase-like"/>
    <property type="match status" value="1"/>
</dbReference>
<dbReference type="PROSITE" id="PS00163">
    <property type="entry name" value="FUMARATE_LYASES"/>
    <property type="match status" value="1"/>
</dbReference>
<organism>
    <name type="scientific">Prochlorococcus marinus (strain MIT 9215)</name>
    <dbReference type="NCBI Taxonomy" id="93060"/>
    <lineage>
        <taxon>Bacteria</taxon>
        <taxon>Bacillati</taxon>
        <taxon>Cyanobacteriota</taxon>
        <taxon>Cyanophyceae</taxon>
        <taxon>Synechococcales</taxon>
        <taxon>Prochlorococcaceae</taxon>
        <taxon>Prochlorococcus</taxon>
    </lineage>
</organism>
<protein>
    <recommendedName>
        <fullName evidence="1">Argininosuccinate lyase</fullName>
        <shortName evidence="1">ASAL</shortName>
        <ecNumber evidence="1">4.3.2.1</ecNumber>
    </recommendedName>
    <alternativeName>
        <fullName evidence="1">Arginosuccinase</fullName>
    </alternativeName>
</protein>
<accession>A8G1Z9</accession>
<evidence type="ECO:0000255" key="1">
    <source>
        <dbReference type="HAMAP-Rule" id="MF_00006"/>
    </source>
</evidence>
<keyword id="KW-0028">Amino-acid biosynthesis</keyword>
<keyword id="KW-0055">Arginine biosynthesis</keyword>
<keyword id="KW-0963">Cytoplasm</keyword>
<keyword id="KW-0456">Lyase</keyword>
<reference key="1">
    <citation type="journal article" date="2007" name="PLoS Genet.">
        <title>Patterns and implications of gene gain and loss in the evolution of Prochlorococcus.</title>
        <authorList>
            <person name="Kettler G.C."/>
            <person name="Martiny A.C."/>
            <person name="Huang K."/>
            <person name="Zucker J."/>
            <person name="Coleman M.L."/>
            <person name="Rodrigue S."/>
            <person name="Chen F."/>
            <person name="Lapidus A."/>
            <person name="Ferriera S."/>
            <person name="Johnson J."/>
            <person name="Steglich C."/>
            <person name="Church G.M."/>
            <person name="Richardson P."/>
            <person name="Chisholm S.W."/>
        </authorList>
    </citation>
    <scope>NUCLEOTIDE SEQUENCE [LARGE SCALE GENOMIC DNA]</scope>
    <source>
        <strain>MIT 9215</strain>
    </source>
</reference>
<sequence>MAKVWSKRFDNALDPFIEKFNASIGFDRKLILEDLDCSIAHAKMLGKTQVLTSSESSQIINGLELIKVEYLEGKFSPGLPSEDIHYSIEEKLISLIGETGKKLHTGRSRNDQVGTDIRLWLRKEIDKIEILITDLQKSFFNIAKSNIYTLIPGYTHMQRAQPLSLAHHLLAYIEMLQRDRERFKEVRARVNISPLGAAALAGTKIKIDRQFTASELGFEKIYKNSIDAVSDRDFCIEFVSASALSMSHLSKISEEIILWVTDEFSFAKLTDKCATGSSLMPQKKNPDVPELIRGKTGRVYGHLQALLTMVKGVPLSYNKDFQEDKEPIFDTAETISSCMKAMTILINEGIEFNIKNLSDSVENDFSNATDLADYLVGKDVPFRTAYQVVGEIVKYCLKRKMLFKNLKIGEFKKFHPEFDEDVFSDLKPHNVVKSRNSEGGTGFVQVEKELNHWQKKLLL</sequence>
<name>ARLY_PROM2</name>
<proteinExistence type="inferred from homology"/>
<feature type="chain" id="PRO_1000057054" description="Argininosuccinate lyase">
    <location>
        <begin position="1"/>
        <end position="459"/>
    </location>
</feature>
<gene>
    <name evidence="1" type="primary">argH</name>
    <name type="ordered locus">P9215_00111</name>
</gene>